<gene>
    <name evidence="7" type="primary">cut1</name>
    <name evidence="7" type="ordered locus">Rv1758</name>
</gene>
<proteinExistence type="inferred from homology"/>
<organism>
    <name type="scientific">Mycobacterium tuberculosis (strain ATCC 25618 / H37Rv)</name>
    <dbReference type="NCBI Taxonomy" id="83332"/>
    <lineage>
        <taxon>Bacteria</taxon>
        <taxon>Bacillati</taxon>
        <taxon>Actinomycetota</taxon>
        <taxon>Actinomycetes</taxon>
        <taxon>Mycobacteriales</taxon>
        <taxon>Mycobacteriaceae</taxon>
        <taxon>Mycobacterium</taxon>
        <taxon>Mycobacterium tuberculosis complex</taxon>
    </lineage>
</organism>
<evidence type="ECO:0000250" key="1">
    <source>
        <dbReference type="UniProtKB" id="O53581"/>
    </source>
</evidence>
<evidence type="ECO:0000250" key="2">
    <source>
        <dbReference type="UniProtKB" id="P00590"/>
    </source>
</evidence>
<evidence type="ECO:0000250" key="3">
    <source>
        <dbReference type="UniProtKB" id="P9WP43"/>
    </source>
</evidence>
<evidence type="ECO:0000269" key="4">
    <source>
    </source>
</evidence>
<evidence type="ECO:0000303" key="5">
    <source>
    </source>
</evidence>
<evidence type="ECO:0000305" key="6"/>
<evidence type="ECO:0000312" key="7">
    <source>
        <dbReference type="EMBL" id="CCP44524.1"/>
    </source>
</evidence>
<keyword id="KW-1015">Disulfide bond</keyword>
<keyword id="KW-0378">Hydrolase</keyword>
<keyword id="KW-1185">Reference proteome</keyword>
<keyword id="KW-0719">Serine esterase</keyword>
<sequence length="174" mass="17868">MPGRFREDFIDALRSKIGEKSMGVYGVDYPATTDFPTAMAGIYDAGTHVEQTAANCPQSKLVLGGFSQGAAVMGFVTAAAIPDGAPLDAPRPMPPEVADHVAAVTLFGMPSVAFMHSIGAPPIVIGPLYAEKTIQLCAPGDPVCSSGGNWAAHNGYADDGMVEQAAVFAAGRLG</sequence>
<protein>
    <recommendedName>
        <fullName evidence="6">Probable carboxylesterase Culp5</fullName>
        <ecNumber evidence="3">3.1.1.-</ecNumber>
    </recommendedName>
    <alternativeName>
        <fullName evidence="5">Cutinase-like protein 5</fullName>
        <shortName evidence="5">Culp5</shortName>
    </alternativeName>
</protein>
<accession>O06793</accession>
<accession>I6YBJ4</accession>
<accession>Q7D805</accession>
<feature type="chain" id="PRO_0000450108" description="Probable carboxylesterase Culp5">
    <location>
        <begin position="1"/>
        <end position="174"/>
    </location>
</feature>
<feature type="active site" description="Nucleophile" evidence="1">
    <location>
        <position position="67"/>
    </location>
</feature>
<feature type="active site" evidence="1">
    <location>
        <position position="141"/>
    </location>
</feature>
<feature type="active site" description="Proton donor/acceptor" evidence="1">
    <location>
        <position position="153"/>
    </location>
</feature>
<feature type="site" description="Transition state stabilizer" evidence="2">
    <location>
        <position position="68"/>
    </location>
</feature>
<feature type="disulfide bond" evidence="1">
    <location>
        <begin position="137"/>
        <end position="144"/>
    </location>
</feature>
<reference key="1">
    <citation type="journal article" date="1998" name="Nature">
        <title>Deciphering the biology of Mycobacterium tuberculosis from the complete genome sequence.</title>
        <authorList>
            <person name="Cole S.T."/>
            <person name="Brosch R."/>
            <person name="Parkhill J."/>
            <person name="Garnier T."/>
            <person name="Churcher C.M."/>
            <person name="Harris D.E."/>
            <person name="Gordon S.V."/>
            <person name="Eiglmeier K."/>
            <person name="Gas S."/>
            <person name="Barry C.E. III"/>
            <person name="Tekaia F."/>
            <person name="Badcock K."/>
            <person name="Basham D."/>
            <person name="Brown D."/>
            <person name="Chillingworth T."/>
            <person name="Connor R."/>
            <person name="Davies R.M."/>
            <person name="Devlin K."/>
            <person name="Feltwell T."/>
            <person name="Gentles S."/>
            <person name="Hamlin N."/>
            <person name="Holroyd S."/>
            <person name="Hornsby T."/>
            <person name="Jagels K."/>
            <person name="Krogh A."/>
            <person name="McLean J."/>
            <person name="Moule S."/>
            <person name="Murphy L.D."/>
            <person name="Oliver S."/>
            <person name="Osborne J."/>
            <person name="Quail M.A."/>
            <person name="Rajandream M.A."/>
            <person name="Rogers J."/>
            <person name="Rutter S."/>
            <person name="Seeger K."/>
            <person name="Skelton S."/>
            <person name="Squares S."/>
            <person name="Squares R."/>
            <person name="Sulston J.E."/>
            <person name="Taylor K."/>
            <person name="Whitehead S."/>
            <person name="Barrell B.G."/>
        </authorList>
    </citation>
    <scope>NUCLEOTIDE SEQUENCE [LARGE SCALE GENOMIC DNA]</scope>
    <source>
        <strain>ATCC 25618 / H37Rv</strain>
    </source>
</reference>
<reference key="2">
    <citation type="journal article" date="2009" name="FASEB J.">
        <title>Cutinase-like proteins of Mycobacterium tuberculosis: characterization of their variable enzymatic functions and active site identification.</title>
        <authorList>
            <person name="West N.P."/>
            <person name="Chow F.M."/>
            <person name="Randall E.J."/>
            <person name="Wu J."/>
            <person name="Chen J."/>
            <person name="Ribeiro J.M."/>
            <person name="Britton W.J."/>
        </authorList>
    </citation>
    <scope>SHOWS THAT IT DOES NOT HAVE CUTINASE ACTIVITY</scope>
    <source>
        <strain>H37Rv</strain>
    </source>
</reference>
<dbReference type="EC" id="3.1.1.-" evidence="3"/>
<dbReference type="EMBL" id="AL123456">
    <property type="protein sequence ID" value="CCP44524.1"/>
    <property type="molecule type" value="Genomic_DNA"/>
</dbReference>
<dbReference type="RefSeq" id="NP_216274.1">
    <property type="nucleotide sequence ID" value="NC_000962.3"/>
</dbReference>
<dbReference type="RefSeq" id="WP_009934708.1">
    <property type="nucleotide sequence ID" value="NC_000962.3"/>
</dbReference>
<dbReference type="SMR" id="O06793"/>
<dbReference type="STRING" id="83332.Rv1758"/>
<dbReference type="ESTHER" id="myctu-RV1758">
    <property type="family name" value="Cutinase"/>
</dbReference>
<dbReference type="PaxDb" id="83332-Rv1758"/>
<dbReference type="DNASU" id="885552"/>
<dbReference type="GeneID" id="885552"/>
<dbReference type="KEGG" id="mtu:Rv1758"/>
<dbReference type="KEGG" id="mtv:RVBD_1758"/>
<dbReference type="PATRIC" id="fig|83332.111.peg.1956"/>
<dbReference type="TubercuList" id="Rv1758"/>
<dbReference type="eggNOG" id="ENOG5030PZC">
    <property type="taxonomic scope" value="Bacteria"/>
</dbReference>
<dbReference type="InParanoid" id="O06793"/>
<dbReference type="OrthoDB" id="3690529at2"/>
<dbReference type="PhylomeDB" id="O06793"/>
<dbReference type="Proteomes" id="UP000001584">
    <property type="component" value="Chromosome"/>
</dbReference>
<dbReference type="GO" id="GO:0106435">
    <property type="term" value="F:carboxylesterase activity"/>
    <property type="evidence" value="ECO:0000318"/>
    <property type="project" value="GO_Central"/>
</dbReference>
<dbReference type="GO" id="GO:0016298">
    <property type="term" value="F:lipase activity"/>
    <property type="evidence" value="ECO:0000318"/>
    <property type="project" value="GO_Central"/>
</dbReference>
<dbReference type="GO" id="GO:0016042">
    <property type="term" value="P:lipid catabolic process"/>
    <property type="evidence" value="ECO:0000318"/>
    <property type="project" value="GO_Central"/>
</dbReference>
<dbReference type="Gene3D" id="3.40.50.1820">
    <property type="entry name" value="alpha/beta hydrolase"/>
    <property type="match status" value="1"/>
</dbReference>
<dbReference type="InterPro" id="IPR029058">
    <property type="entry name" value="AB_hydrolase_fold"/>
</dbReference>
<dbReference type="InterPro" id="IPR000675">
    <property type="entry name" value="Cutinase/axe"/>
</dbReference>
<dbReference type="PANTHER" id="PTHR33630:SF9">
    <property type="entry name" value="CUTINASE 4"/>
    <property type="match status" value="1"/>
</dbReference>
<dbReference type="PANTHER" id="PTHR33630">
    <property type="entry name" value="CUTINASE RV1984C-RELATED-RELATED"/>
    <property type="match status" value="1"/>
</dbReference>
<dbReference type="Pfam" id="PF01083">
    <property type="entry name" value="Cutinase"/>
    <property type="match status" value="1"/>
</dbReference>
<dbReference type="SMART" id="SM01110">
    <property type="entry name" value="Cutinase"/>
    <property type="match status" value="1"/>
</dbReference>
<dbReference type="SUPFAM" id="SSF53474">
    <property type="entry name" value="alpha/beta-Hydrolases"/>
    <property type="match status" value="1"/>
</dbReference>
<comment type="function">
    <text evidence="4">Does not exhibit cutinase activity.</text>
</comment>
<comment type="similarity">
    <text evidence="6">Belongs to the cutinase family.</text>
</comment>
<name>CULP5_MYCTU</name>